<accession>A5V3W3</accession>
<protein>
    <recommendedName>
        <fullName evidence="1">Ketol-acid reductoisomerase (NADP(+))</fullName>
        <shortName evidence="1">KARI</shortName>
        <ecNumber evidence="1">1.1.1.86</ecNumber>
    </recommendedName>
    <alternativeName>
        <fullName evidence="1">Acetohydroxy-acid isomeroreductase</fullName>
        <shortName evidence="1">AHIR</shortName>
    </alternativeName>
    <alternativeName>
        <fullName evidence="1">Alpha-keto-beta-hydroxylacyl reductoisomerase</fullName>
    </alternativeName>
    <alternativeName>
        <fullName evidence="1">Ketol-acid reductoisomerase type 1</fullName>
    </alternativeName>
    <alternativeName>
        <fullName evidence="1">Ketol-acid reductoisomerase type I</fullName>
    </alternativeName>
</protein>
<name>ILVC_RHIWR</name>
<sequence>MRVYYDRDADIGLIKTKKVAIVGYGSQGHAHAQNLQDSGVADVAIALRPGSATAKKAEGAGFKVLSNADAAKWADIVMILAPDEHQAAIYNDDLRDNLKPGAALAFAHGLNVHFGLIEPRADIDVFMIAPKGPGHTVRSEYQRGGGVPCLIAIAQDASGNAHDVALSYASAIGGGRSGVIETTFKEECETDLFGEQAVLCGGLSHLIMAGFETLVEAGYAPEMAYFECLHEVKLIVDLMYEGGIANMRYSISNTAEYGDIHTGPRVITSETKAEMKRVLDDIQKGKFVKRFVLDNRAGQPELKASRKLVAEHPIEKVGAELRAMMPWISKNQLVDKAKN</sequence>
<proteinExistence type="inferred from homology"/>
<feature type="chain" id="PRO_1000050576" description="Ketol-acid reductoisomerase (NADP(+))">
    <location>
        <begin position="1"/>
        <end position="339"/>
    </location>
</feature>
<feature type="domain" description="KARI N-terminal Rossmann" evidence="2">
    <location>
        <begin position="1"/>
        <end position="182"/>
    </location>
</feature>
<feature type="domain" description="KARI C-terminal knotted" evidence="3">
    <location>
        <begin position="183"/>
        <end position="328"/>
    </location>
</feature>
<feature type="active site" evidence="1">
    <location>
        <position position="108"/>
    </location>
</feature>
<feature type="binding site" evidence="1">
    <location>
        <begin position="24"/>
        <end position="27"/>
    </location>
    <ligand>
        <name>NADP(+)</name>
        <dbReference type="ChEBI" id="CHEBI:58349"/>
    </ligand>
</feature>
<feature type="binding site" evidence="1">
    <location>
        <position position="48"/>
    </location>
    <ligand>
        <name>NADP(+)</name>
        <dbReference type="ChEBI" id="CHEBI:58349"/>
    </ligand>
</feature>
<feature type="binding site" evidence="1">
    <location>
        <position position="51"/>
    </location>
    <ligand>
        <name>NADP(+)</name>
        <dbReference type="ChEBI" id="CHEBI:58349"/>
    </ligand>
</feature>
<feature type="binding site" evidence="1">
    <location>
        <position position="53"/>
    </location>
    <ligand>
        <name>NADP(+)</name>
        <dbReference type="ChEBI" id="CHEBI:58349"/>
    </ligand>
</feature>
<feature type="binding site" evidence="1">
    <location>
        <begin position="83"/>
        <end position="86"/>
    </location>
    <ligand>
        <name>NADP(+)</name>
        <dbReference type="ChEBI" id="CHEBI:58349"/>
    </ligand>
</feature>
<feature type="binding site" evidence="1">
    <location>
        <position position="134"/>
    </location>
    <ligand>
        <name>NADP(+)</name>
        <dbReference type="ChEBI" id="CHEBI:58349"/>
    </ligand>
</feature>
<feature type="binding site" evidence="1">
    <location>
        <position position="191"/>
    </location>
    <ligand>
        <name>Mg(2+)</name>
        <dbReference type="ChEBI" id="CHEBI:18420"/>
        <label>1</label>
    </ligand>
</feature>
<feature type="binding site" evidence="1">
    <location>
        <position position="191"/>
    </location>
    <ligand>
        <name>Mg(2+)</name>
        <dbReference type="ChEBI" id="CHEBI:18420"/>
        <label>2</label>
    </ligand>
</feature>
<feature type="binding site" evidence="1">
    <location>
        <position position="195"/>
    </location>
    <ligand>
        <name>Mg(2+)</name>
        <dbReference type="ChEBI" id="CHEBI:18420"/>
        <label>1</label>
    </ligand>
</feature>
<feature type="binding site" evidence="1">
    <location>
        <position position="227"/>
    </location>
    <ligand>
        <name>Mg(2+)</name>
        <dbReference type="ChEBI" id="CHEBI:18420"/>
        <label>2</label>
    </ligand>
</feature>
<feature type="binding site" evidence="1">
    <location>
        <position position="231"/>
    </location>
    <ligand>
        <name>Mg(2+)</name>
        <dbReference type="ChEBI" id="CHEBI:18420"/>
        <label>2</label>
    </ligand>
</feature>
<feature type="binding site" evidence="1">
    <location>
        <position position="252"/>
    </location>
    <ligand>
        <name>substrate</name>
    </ligand>
</feature>
<gene>
    <name evidence="1" type="primary">ilvC</name>
    <name type="ordered locus">Swit_0611</name>
</gene>
<evidence type="ECO:0000255" key="1">
    <source>
        <dbReference type="HAMAP-Rule" id="MF_00435"/>
    </source>
</evidence>
<evidence type="ECO:0000255" key="2">
    <source>
        <dbReference type="PROSITE-ProRule" id="PRU01197"/>
    </source>
</evidence>
<evidence type="ECO:0000255" key="3">
    <source>
        <dbReference type="PROSITE-ProRule" id="PRU01198"/>
    </source>
</evidence>
<keyword id="KW-0028">Amino-acid biosynthesis</keyword>
<keyword id="KW-0100">Branched-chain amino acid biosynthesis</keyword>
<keyword id="KW-0460">Magnesium</keyword>
<keyword id="KW-0479">Metal-binding</keyword>
<keyword id="KW-0521">NADP</keyword>
<keyword id="KW-0560">Oxidoreductase</keyword>
<keyword id="KW-1185">Reference proteome</keyword>
<comment type="function">
    <text evidence="1">Involved in the biosynthesis of branched-chain amino acids (BCAA). Catalyzes an alkyl-migration followed by a ketol-acid reduction of (S)-2-acetolactate (S2AL) to yield (R)-2,3-dihydroxy-isovalerate. In the isomerase reaction, S2AL is rearranged via a Mg-dependent methyl migration to produce 3-hydroxy-3-methyl-2-ketobutyrate (HMKB). In the reductase reaction, this 2-ketoacid undergoes a metal-dependent reduction by NADPH to yield (R)-2,3-dihydroxy-isovalerate.</text>
</comment>
<comment type="catalytic activity">
    <reaction evidence="1">
        <text>(2R)-2,3-dihydroxy-3-methylbutanoate + NADP(+) = (2S)-2-acetolactate + NADPH + H(+)</text>
        <dbReference type="Rhea" id="RHEA:22068"/>
        <dbReference type="ChEBI" id="CHEBI:15378"/>
        <dbReference type="ChEBI" id="CHEBI:49072"/>
        <dbReference type="ChEBI" id="CHEBI:57783"/>
        <dbReference type="ChEBI" id="CHEBI:58349"/>
        <dbReference type="ChEBI" id="CHEBI:58476"/>
        <dbReference type="EC" id="1.1.1.86"/>
    </reaction>
</comment>
<comment type="catalytic activity">
    <reaction evidence="1">
        <text>(2R,3R)-2,3-dihydroxy-3-methylpentanoate + NADP(+) = (S)-2-ethyl-2-hydroxy-3-oxobutanoate + NADPH + H(+)</text>
        <dbReference type="Rhea" id="RHEA:13493"/>
        <dbReference type="ChEBI" id="CHEBI:15378"/>
        <dbReference type="ChEBI" id="CHEBI:49256"/>
        <dbReference type="ChEBI" id="CHEBI:49258"/>
        <dbReference type="ChEBI" id="CHEBI:57783"/>
        <dbReference type="ChEBI" id="CHEBI:58349"/>
        <dbReference type="EC" id="1.1.1.86"/>
    </reaction>
</comment>
<comment type="cofactor">
    <cofactor evidence="1">
        <name>Mg(2+)</name>
        <dbReference type="ChEBI" id="CHEBI:18420"/>
    </cofactor>
    <text evidence="1">Binds 2 magnesium ions per subunit.</text>
</comment>
<comment type="pathway">
    <text evidence="1">Amino-acid biosynthesis; L-isoleucine biosynthesis; L-isoleucine from 2-oxobutanoate: step 2/4.</text>
</comment>
<comment type="pathway">
    <text evidence="1">Amino-acid biosynthesis; L-valine biosynthesis; L-valine from pyruvate: step 2/4.</text>
</comment>
<comment type="similarity">
    <text evidence="1">Belongs to the ketol-acid reductoisomerase family.</text>
</comment>
<organism>
    <name type="scientific">Rhizorhabdus wittichii (strain DSM 6014 / CCUG 31198 / JCM 15750 / NBRC 105917 / EY 4224 / RW1)</name>
    <name type="common">Sphingomonas wittichii</name>
    <dbReference type="NCBI Taxonomy" id="392499"/>
    <lineage>
        <taxon>Bacteria</taxon>
        <taxon>Pseudomonadati</taxon>
        <taxon>Pseudomonadota</taxon>
        <taxon>Alphaproteobacteria</taxon>
        <taxon>Sphingomonadales</taxon>
        <taxon>Sphingomonadaceae</taxon>
        <taxon>Rhizorhabdus</taxon>
    </lineage>
</organism>
<dbReference type="EC" id="1.1.1.86" evidence="1"/>
<dbReference type="EMBL" id="CP000699">
    <property type="protein sequence ID" value="ABQ66979.1"/>
    <property type="molecule type" value="Genomic_DNA"/>
</dbReference>
<dbReference type="SMR" id="A5V3W3"/>
<dbReference type="STRING" id="392499.Swit_0611"/>
<dbReference type="PaxDb" id="392499-Swit_0611"/>
<dbReference type="KEGG" id="swi:Swit_0611"/>
<dbReference type="eggNOG" id="COG0059">
    <property type="taxonomic scope" value="Bacteria"/>
</dbReference>
<dbReference type="HOGENOM" id="CLU_033821_0_1_5"/>
<dbReference type="OrthoDB" id="9804088at2"/>
<dbReference type="UniPathway" id="UPA00047">
    <property type="reaction ID" value="UER00056"/>
</dbReference>
<dbReference type="UniPathway" id="UPA00049">
    <property type="reaction ID" value="UER00060"/>
</dbReference>
<dbReference type="Proteomes" id="UP000001989">
    <property type="component" value="Chromosome"/>
</dbReference>
<dbReference type="GO" id="GO:0005829">
    <property type="term" value="C:cytosol"/>
    <property type="evidence" value="ECO:0007669"/>
    <property type="project" value="TreeGrafter"/>
</dbReference>
<dbReference type="GO" id="GO:0004455">
    <property type="term" value="F:ketol-acid reductoisomerase activity"/>
    <property type="evidence" value="ECO:0007669"/>
    <property type="project" value="UniProtKB-UniRule"/>
</dbReference>
<dbReference type="GO" id="GO:0000287">
    <property type="term" value="F:magnesium ion binding"/>
    <property type="evidence" value="ECO:0007669"/>
    <property type="project" value="UniProtKB-UniRule"/>
</dbReference>
<dbReference type="GO" id="GO:0050661">
    <property type="term" value="F:NADP binding"/>
    <property type="evidence" value="ECO:0007669"/>
    <property type="project" value="InterPro"/>
</dbReference>
<dbReference type="GO" id="GO:0009097">
    <property type="term" value="P:isoleucine biosynthetic process"/>
    <property type="evidence" value="ECO:0007669"/>
    <property type="project" value="UniProtKB-UniRule"/>
</dbReference>
<dbReference type="GO" id="GO:0009099">
    <property type="term" value="P:L-valine biosynthetic process"/>
    <property type="evidence" value="ECO:0007669"/>
    <property type="project" value="UniProtKB-UniRule"/>
</dbReference>
<dbReference type="FunFam" id="3.40.50.720:FF:000023">
    <property type="entry name" value="Ketol-acid reductoisomerase (NADP(+))"/>
    <property type="match status" value="1"/>
</dbReference>
<dbReference type="Gene3D" id="6.10.240.10">
    <property type="match status" value="1"/>
</dbReference>
<dbReference type="Gene3D" id="3.40.50.720">
    <property type="entry name" value="NAD(P)-binding Rossmann-like Domain"/>
    <property type="match status" value="1"/>
</dbReference>
<dbReference type="HAMAP" id="MF_00435">
    <property type="entry name" value="IlvC"/>
    <property type="match status" value="1"/>
</dbReference>
<dbReference type="InterPro" id="IPR008927">
    <property type="entry name" value="6-PGluconate_DH-like_C_sf"/>
</dbReference>
<dbReference type="InterPro" id="IPR013023">
    <property type="entry name" value="KARI"/>
</dbReference>
<dbReference type="InterPro" id="IPR000506">
    <property type="entry name" value="KARI_C"/>
</dbReference>
<dbReference type="InterPro" id="IPR013116">
    <property type="entry name" value="KARI_N"/>
</dbReference>
<dbReference type="InterPro" id="IPR014359">
    <property type="entry name" value="KARI_prok"/>
</dbReference>
<dbReference type="InterPro" id="IPR036291">
    <property type="entry name" value="NAD(P)-bd_dom_sf"/>
</dbReference>
<dbReference type="NCBIfam" id="TIGR00465">
    <property type="entry name" value="ilvC"/>
    <property type="match status" value="1"/>
</dbReference>
<dbReference type="NCBIfam" id="NF004017">
    <property type="entry name" value="PRK05479.1"/>
    <property type="match status" value="1"/>
</dbReference>
<dbReference type="NCBIfam" id="NF009940">
    <property type="entry name" value="PRK13403.1"/>
    <property type="match status" value="1"/>
</dbReference>
<dbReference type="PANTHER" id="PTHR21371">
    <property type="entry name" value="KETOL-ACID REDUCTOISOMERASE, MITOCHONDRIAL"/>
    <property type="match status" value="1"/>
</dbReference>
<dbReference type="PANTHER" id="PTHR21371:SF1">
    <property type="entry name" value="KETOL-ACID REDUCTOISOMERASE, MITOCHONDRIAL"/>
    <property type="match status" value="1"/>
</dbReference>
<dbReference type="Pfam" id="PF01450">
    <property type="entry name" value="KARI_C"/>
    <property type="match status" value="1"/>
</dbReference>
<dbReference type="Pfam" id="PF07991">
    <property type="entry name" value="KARI_N"/>
    <property type="match status" value="1"/>
</dbReference>
<dbReference type="PIRSF" id="PIRSF000116">
    <property type="entry name" value="IlvC_gammaproteo"/>
    <property type="match status" value="1"/>
</dbReference>
<dbReference type="SUPFAM" id="SSF48179">
    <property type="entry name" value="6-phosphogluconate dehydrogenase C-terminal domain-like"/>
    <property type="match status" value="1"/>
</dbReference>
<dbReference type="SUPFAM" id="SSF51735">
    <property type="entry name" value="NAD(P)-binding Rossmann-fold domains"/>
    <property type="match status" value="1"/>
</dbReference>
<dbReference type="PROSITE" id="PS51851">
    <property type="entry name" value="KARI_C"/>
    <property type="match status" value="1"/>
</dbReference>
<dbReference type="PROSITE" id="PS51850">
    <property type="entry name" value="KARI_N"/>
    <property type="match status" value="1"/>
</dbReference>
<reference key="1">
    <citation type="journal article" date="2010" name="J. Bacteriol.">
        <title>Genome sequence of the dioxin-mineralizing bacterium Sphingomonas wittichii RW1.</title>
        <authorList>
            <person name="Miller T.R."/>
            <person name="Delcher A.L."/>
            <person name="Salzberg S.L."/>
            <person name="Saunders E."/>
            <person name="Detter J.C."/>
            <person name="Halden R.U."/>
        </authorList>
    </citation>
    <scope>NUCLEOTIDE SEQUENCE [LARGE SCALE GENOMIC DNA]</scope>
    <source>
        <strain>DSM 6014 / CCUG 31198 / JCM 15750 / NBRC 105917 / EY 4224 / RW1</strain>
    </source>
</reference>